<protein>
    <recommendedName>
        <fullName evidence="1">Fructose-1,6-bisphosphatase class 1</fullName>
        <shortName evidence="1">FBPase class 1</shortName>
        <ecNumber evidence="1">3.1.3.11</ecNumber>
    </recommendedName>
    <alternativeName>
        <fullName evidence="1">D-fructose-1,6-bisphosphate 1-phosphohydrolase class 1</fullName>
    </alternativeName>
</protein>
<evidence type="ECO:0000255" key="1">
    <source>
        <dbReference type="HAMAP-Rule" id="MF_01855"/>
    </source>
</evidence>
<keyword id="KW-0119">Carbohydrate metabolism</keyword>
<keyword id="KW-0963">Cytoplasm</keyword>
<keyword id="KW-0378">Hydrolase</keyword>
<keyword id="KW-0460">Magnesium</keyword>
<keyword id="KW-0479">Metal-binding</keyword>
<keyword id="KW-1185">Reference proteome</keyword>
<comment type="catalytic activity">
    <reaction evidence="1">
        <text>beta-D-fructose 1,6-bisphosphate + H2O = beta-D-fructose 6-phosphate + phosphate</text>
        <dbReference type="Rhea" id="RHEA:11064"/>
        <dbReference type="ChEBI" id="CHEBI:15377"/>
        <dbReference type="ChEBI" id="CHEBI:32966"/>
        <dbReference type="ChEBI" id="CHEBI:43474"/>
        <dbReference type="ChEBI" id="CHEBI:57634"/>
        <dbReference type="EC" id="3.1.3.11"/>
    </reaction>
</comment>
<comment type="cofactor">
    <cofactor evidence="1">
        <name>Mg(2+)</name>
        <dbReference type="ChEBI" id="CHEBI:18420"/>
    </cofactor>
    <text evidence="1">Binds 2 magnesium ions per subunit.</text>
</comment>
<comment type="pathway">
    <text evidence="1">Carbohydrate biosynthesis; gluconeogenesis.</text>
</comment>
<comment type="subunit">
    <text evidence="1">Homotetramer.</text>
</comment>
<comment type="subcellular location">
    <subcellularLocation>
        <location evidence="1">Cytoplasm</location>
    </subcellularLocation>
</comment>
<comment type="similarity">
    <text evidence="1">Belongs to the FBPase class 1 family.</text>
</comment>
<reference key="1">
    <citation type="journal article" date="2002" name="Nature">
        <title>Genome sequence of the plant pathogen Ralstonia solanacearum.</title>
        <authorList>
            <person name="Salanoubat M."/>
            <person name="Genin S."/>
            <person name="Artiguenave F."/>
            <person name="Gouzy J."/>
            <person name="Mangenot S."/>
            <person name="Arlat M."/>
            <person name="Billault A."/>
            <person name="Brottier P."/>
            <person name="Camus J.-C."/>
            <person name="Cattolico L."/>
            <person name="Chandler M."/>
            <person name="Choisne N."/>
            <person name="Claudel-Renard C."/>
            <person name="Cunnac S."/>
            <person name="Demange N."/>
            <person name="Gaspin C."/>
            <person name="Lavie M."/>
            <person name="Moisan A."/>
            <person name="Robert C."/>
            <person name="Saurin W."/>
            <person name="Schiex T."/>
            <person name="Siguier P."/>
            <person name="Thebault P."/>
            <person name="Whalen M."/>
            <person name="Wincker P."/>
            <person name="Levy M."/>
            <person name="Weissenbach J."/>
            <person name="Boucher C.A."/>
        </authorList>
    </citation>
    <scope>NUCLEOTIDE SEQUENCE [LARGE SCALE GENOMIC DNA]</scope>
    <source>
        <strain>ATCC BAA-1114 / GMI1000</strain>
    </source>
</reference>
<dbReference type="EC" id="3.1.3.11" evidence="1"/>
<dbReference type="EMBL" id="AL646052">
    <property type="protein sequence ID" value="CAD15833.1"/>
    <property type="molecule type" value="Genomic_DNA"/>
</dbReference>
<dbReference type="RefSeq" id="WP_011002057.1">
    <property type="nucleotide sequence ID" value="NC_003295.1"/>
</dbReference>
<dbReference type="SMR" id="Q8XXI7"/>
<dbReference type="STRING" id="267608.RSc2126"/>
<dbReference type="EnsemblBacteria" id="CAD15833">
    <property type="protein sequence ID" value="CAD15833"/>
    <property type="gene ID" value="RSc2126"/>
</dbReference>
<dbReference type="KEGG" id="rso:RSc2126"/>
<dbReference type="eggNOG" id="COG0158">
    <property type="taxonomic scope" value="Bacteria"/>
</dbReference>
<dbReference type="HOGENOM" id="CLU_039977_0_0_4"/>
<dbReference type="UniPathway" id="UPA00138"/>
<dbReference type="Proteomes" id="UP000001436">
    <property type="component" value="Chromosome"/>
</dbReference>
<dbReference type="GO" id="GO:0005829">
    <property type="term" value="C:cytosol"/>
    <property type="evidence" value="ECO:0007669"/>
    <property type="project" value="TreeGrafter"/>
</dbReference>
<dbReference type="GO" id="GO:0042132">
    <property type="term" value="F:fructose 1,6-bisphosphate 1-phosphatase activity"/>
    <property type="evidence" value="ECO:0007669"/>
    <property type="project" value="UniProtKB-UniRule"/>
</dbReference>
<dbReference type="GO" id="GO:0000287">
    <property type="term" value="F:magnesium ion binding"/>
    <property type="evidence" value="ECO:0007669"/>
    <property type="project" value="UniProtKB-UniRule"/>
</dbReference>
<dbReference type="GO" id="GO:0030388">
    <property type="term" value="P:fructose 1,6-bisphosphate metabolic process"/>
    <property type="evidence" value="ECO:0007669"/>
    <property type="project" value="TreeGrafter"/>
</dbReference>
<dbReference type="GO" id="GO:0006002">
    <property type="term" value="P:fructose 6-phosphate metabolic process"/>
    <property type="evidence" value="ECO:0007669"/>
    <property type="project" value="TreeGrafter"/>
</dbReference>
<dbReference type="GO" id="GO:0006000">
    <property type="term" value="P:fructose metabolic process"/>
    <property type="evidence" value="ECO:0007669"/>
    <property type="project" value="TreeGrafter"/>
</dbReference>
<dbReference type="GO" id="GO:0006094">
    <property type="term" value="P:gluconeogenesis"/>
    <property type="evidence" value="ECO:0007669"/>
    <property type="project" value="UniProtKB-UniRule"/>
</dbReference>
<dbReference type="GO" id="GO:0005986">
    <property type="term" value="P:sucrose biosynthetic process"/>
    <property type="evidence" value="ECO:0007669"/>
    <property type="project" value="TreeGrafter"/>
</dbReference>
<dbReference type="CDD" id="cd00354">
    <property type="entry name" value="FBPase"/>
    <property type="match status" value="1"/>
</dbReference>
<dbReference type="FunFam" id="3.30.540.10:FF:000006">
    <property type="entry name" value="Fructose-1,6-bisphosphatase class 1"/>
    <property type="match status" value="1"/>
</dbReference>
<dbReference type="FunFam" id="3.40.190.80:FF:000011">
    <property type="entry name" value="Fructose-1,6-bisphosphatase class 1"/>
    <property type="match status" value="1"/>
</dbReference>
<dbReference type="Gene3D" id="3.40.190.80">
    <property type="match status" value="1"/>
</dbReference>
<dbReference type="Gene3D" id="3.30.540.10">
    <property type="entry name" value="Fructose-1,6-Bisphosphatase, subunit A, domain 1"/>
    <property type="match status" value="1"/>
</dbReference>
<dbReference type="HAMAP" id="MF_01855">
    <property type="entry name" value="FBPase_class1"/>
    <property type="match status" value="1"/>
</dbReference>
<dbReference type="InterPro" id="IPR044015">
    <property type="entry name" value="FBPase_C_dom"/>
</dbReference>
<dbReference type="InterPro" id="IPR000146">
    <property type="entry name" value="FBPase_class-1"/>
</dbReference>
<dbReference type="InterPro" id="IPR033391">
    <property type="entry name" value="FBPase_N"/>
</dbReference>
<dbReference type="InterPro" id="IPR028343">
    <property type="entry name" value="FBPtase"/>
</dbReference>
<dbReference type="NCBIfam" id="NF006778">
    <property type="entry name" value="PRK09293.1-1"/>
    <property type="match status" value="1"/>
</dbReference>
<dbReference type="NCBIfam" id="NF006779">
    <property type="entry name" value="PRK09293.1-3"/>
    <property type="match status" value="1"/>
</dbReference>
<dbReference type="NCBIfam" id="NF006780">
    <property type="entry name" value="PRK09293.1-4"/>
    <property type="match status" value="1"/>
</dbReference>
<dbReference type="PANTHER" id="PTHR11556">
    <property type="entry name" value="FRUCTOSE-1,6-BISPHOSPHATASE-RELATED"/>
    <property type="match status" value="1"/>
</dbReference>
<dbReference type="PANTHER" id="PTHR11556:SF35">
    <property type="entry name" value="SEDOHEPTULOSE-1,7-BISPHOSPHATASE, CHLOROPLASTIC"/>
    <property type="match status" value="1"/>
</dbReference>
<dbReference type="Pfam" id="PF00316">
    <property type="entry name" value="FBPase"/>
    <property type="match status" value="1"/>
</dbReference>
<dbReference type="Pfam" id="PF18913">
    <property type="entry name" value="FBPase_C"/>
    <property type="match status" value="1"/>
</dbReference>
<dbReference type="PIRSF" id="PIRSF500210">
    <property type="entry name" value="FBPtase"/>
    <property type="match status" value="1"/>
</dbReference>
<dbReference type="PIRSF" id="PIRSF000904">
    <property type="entry name" value="FBPtase_SBPase"/>
    <property type="match status" value="1"/>
</dbReference>
<dbReference type="PRINTS" id="PR00115">
    <property type="entry name" value="F16BPHPHTASE"/>
</dbReference>
<dbReference type="SUPFAM" id="SSF56655">
    <property type="entry name" value="Carbohydrate phosphatase"/>
    <property type="match status" value="1"/>
</dbReference>
<accession>Q8XXI7</accession>
<name>F16PA_RALN1</name>
<proteinExistence type="inferred from homology"/>
<feature type="chain" id="PRO_0000364665" description="Fructose-1,6-bisphosphatase class 1">
    <location>
        <begin position="1"/>
        <end position="338"/>
    </location>
</feature>
<feature type="binding site" evidence="1">
    <location>
        <position position="91"/>
    </location>
    <ligand>
        <name>Mg(2+)</name>
        <dbReference type="ChEBI" id="CHEBI:18420"/>
        <label>1</label>
    </ligand>
</feature>
<feature type="binding site" evidence="1">
    <location>
        <position position="113"/>
    </location>
    <ligand>
        <name>Mg(2+)</name>
        <dbReference type="ChEBI" id="CHEBI:18420"/>
        <label>1</label>
    </ligand>
</feature>
<feature type="binding site" evidence="1">
    <location>
        <position position="113"/>
    </location>
    <ligand>
        <name>Mg(2+)</name>
        <dbReference type="ChEBI" id="CHEBI:18420"/>
        <label>2</label>
    </ligand>
</feature>
<feature type="binding site" evidence="1">
    <location>
        <position position="115"/>
    </location>
    <ligand>
        <name>Mg(2+)</name>
        <dbReference type="ChEBI" id="CHEBI:18420"/>
        <label>1</label>
    </ligand>
</feature>
<feature type="binding site" evidence="1">
    <location>
        <begin position="116"/>
        <end position="119"/>
    </location>
    <ligand>
        <name>substrate</name>
    </ligand>
</feature>
<feature type="binding site" evidence="1">
    <location>
        <position position="116"/>
    </location>
    <ligand>
        <name>Mg(2+)</name>
        <dbReference type="ChEBI" id="CHEBI:18420"/>
        <label>2</label>
    </ligand>
</feature>
<feature type="binding site" evidence="1">
    <location>
        <position position="208"/>
    </location>
    <ligand>
        <name>substrate</name>
    </ligand>
</feature>
<feature type="binding site" evidence="1">
    <location>
        <position position="274"/>
    </location>
    <ligand>
        <name>substrate</name>
    </ligand>
</feature>
<feature type="binding site" evidence="1">
    <location>
        <position position="280"/>
    </location>
    <ligand>
        <name>Mg(2+)</name>
        <dbReference type="ChEBI" id="CHEBI:18420"/>
        <label>2</label>
    </ligand>
</feature>
<gene>
    <name evidence="1" type="primary">fbp1</name>
    <name type="ordered locus">RSc2126</name>
</gene>
<sequence length="338" mass="37544">MKRINLTRYLIEEQREHNTIPAELRLLLEVVARACKAISHSVNKGALAGVLGSAGTGNVQGETQQKLDVIANEVLLEANEYGGNLAAMASEEMESFYEIPHRYPKGEYLLLFDPLDGSSNIDVNVSIGTIFSVLHMPKPGQTVTEADFMQPGVRQVAAGYAVYGPQTTLVLTVGNGVHMFTLDREVGSFILTNRDVKIPADTKEFAINMSNMRHWAPPVRRYIDECLAGTEGPRGKDFNMRWIASMVADVHRILTRGGIFMYPWDKREPGKAGKLRLMYEANPMAFLVEQAGGAATNGHQRILEIQPEKLHQRVAVILGSKNEVDRVTQYHREAQQTA</sequence>
<organism>
    <name type="scientific">Ralstonia nicotianae (strain ATCC BAA-1114 / GMI1000)</name>
    <name type="common">Ralstonia solanacearum</name>
    <dbReference type="NCBI Taxonomy" id="267608"/>
    <lineage>
        <taxon>Bacteria</taxon>
        <taxon>Pseudomonadati</taxon>
        <taxon>Pseudomonadota</taxon>
        <taxon>Betaproteobacteria</taxon>
        <taxon>Burkholderiales</taxon>
        <taxon>Burkholderiaceae</taxon>
        <taxon>Ralstonia</taxon>
        <taxon>Ralstonia solanacearum species complex</taxon>
    </lineage>
</organism>